<sequence length="196" mass="21665">MALVPIVVEQTSKGERSYDIYSRLLKERIIFLTGQVEDHMANLIVAQMLFLEAEDPEKDIYLYINSPGGVVTAGLAIYDTMNFIKPDVATLCTGQACSMGAFLLSGGAKGKRFALPNARVMIHQPLGGARGQATDIQIQAQEILKLKEMLTRKMAEHSGQPFEKVAADTERDNFMSAVEAMEYGLIDKVLTHRDIK</sequence>
<feature type="chain" id="PRO_1000189627" description="ATP-dependent Clp protease proteolytic subunit">
    <location>
        <begin position="1"/>
        <end position="196"/>
    </location>
</feature>
<feature type="active site" description="Nucleophile" evidence="1">
    <location>
        <position position="98"/>
    </location>
</feature>
<feature type="active site" evidence="1">
    <location>
        <position position="123"/>
    </location>
</feature>
<keyword id="KW-0963">Cytoplasm</keyword>
<keyword id="KW-0378">Hydrolase</keyword>
<keyword id="KW-0645">Protease</keyword>
<keyword id="KW-0720">Serine protease</keyword>
<name>CLPP_ACTP7</name>
<reference key="1">
    <citation type="submission" date="2008-06" db="EMBL/GenBank/DDBJ databases">
        <title>Genome and proteome analysis of A. pleuropneumoniae serotype 7.</title>
        <authorList>
            <person name="Linke B."/>
            <person name="Buettner F."/>
            <person name="Martinez-Arias R."/>
            <person name="Goesmann A."/>
            <person name="Baltes N."/>
            <person name="Tegetmeyer H."/>
            <person name="Singh M."/>
            <person name="Gerlach G.F."/>
        </authorList>
    </citation>
    <scope>NUCLEOTIDE SEQUENCE [LARGE SCALE GENOMIC DNA]</scope>
    <source>
        <strain>AP76</strain>
    </source>
</reference>
<evidence type="ECO:0000255" key="1">
    <source>
        <dbReference type="HAMAP-Rule" id="MF_00444"/>
    </source>
</evidence>
<protein>
    <recommendedName>
        <fullName evidence="1">ATP-dependent Clp protease proteolytic subunit</fullName>
        <ecNumber evidence="1">3.4.21.92</ecNumber>
    </recommendedName>
    <alternativeName>
        <fullName evidence="1">Endopeptidase Clp</fullName>
    </alternativeName>
</protein>
<proteinExistence type="inferred from homology"/>
<dbReference type="EC" id="3.4.21.92" evidence="1"/>
<dbReference type="EMBL" id="CP001091">
    <property type="protein sequence ID" value="ACE61982.1"/>
    <property type="molecule type" value="Genomic_DNA"/>
</dbReference>
<dbReference type="RefSeq" id="WP_005601821.1">
    <property type="nucleotide sequence ID" value="NC_010939.1"/>
</dbReference>
<dbReference type="SMR" id="B3H252"/>
<dbReference type="MEROPS" id="S14.001"/>
<dbReference type="KEGG" id="apa:APP7_1330"/>
<dbReference type="HOGENOM" id="CLU_058707_3_2_6"/>
<dbReference type="Proteomes" id="UP000001226">
    <property type="component" value="Chromosome"/>
</dbReference>
<dbReference type="GO" id="GO:0005737">
    <property type="term" value="C:cytoplasm"/>
    <property type="evidence" value="ECO:0007669"/>
    <property type="project" value="UniProtKB-SubCell"/>
</dbReference>
<dbReference type="GO" id="GO:0009368">
    <property type="term" value="C:endopeptidase Clp complex"/>
    <property type="evidence" value="ECO:0007669"/>
    <property type="project" value="TreeGrafter"/>
</dbReference>
<dbReference type="GO" id="GO:0004176">
    <property type="term" value="F:ATP-dependent peptidase activity"/>
    <property type="evidence" value="ECO:0007669"/>
    <property type="project" value="InterPro"/>
</dbReference>
<dbReference type="GO" id="GO:0051117">
    <property type="term" value="F:ATPase binding"/>
    <property type="evidence" value="ECO:0007669"/>
    <property type="project" value="TreeGrafter"/>
</dbReference>
<dbReference type="GO" id="GO:0004252">
    <property type="term" value="F:serine-type endopeptidase activity"/>
    <property type="evidence" value="ECO:0007669"/>
    <property type="project" value="UniProtKB-UniRule"/>
</dbReference>
<dbReference type="GO" id="GO:0006515">
    <property type="term" value="P:protein quality control for misfolded or incompletely synthesized proteins"/>
    <property type="evidence" value="ECO:0007669"/>
    <property type="project" value="TreeGrafter"/>
</dbReference>
<dbReference type="CDD" id="cd07017">
    <property type="entry name" value="S14_ClpP_2"/>
    <property type="match status" value="1"/>
</dbReference>
<dbReference type="FunFam" id="3.90.226.10:FF:000001">
    <property type="entry name" value="ATP-dependent Clp protease proteolytic subunit"/>
    <property type="match status" value="1"/>
</dbReference>
<dbReference type="Gene3D" id="3.90.226.10">
    <property type="entry name" value="2-enoyl-CoA Hydratase, Chain A, domain 1"/>
    <property type="match status" value="1"/>
</dbReference>
<dbReference type="HAMAP" id="MF_00444">
    <property type="entry name" value="ClpP"/>
    <property type="match status" value="1"/>
</dbReference>
<dbReference type="InterPro" id="IPR001907">
    <property type="entry name" value="ClpP"/>
</dbReference>
<dbReference type="InterPro" id="IPR029045">
    <property type="entry name" value="ClpP/crotonase-like_dom_sf"/>
</dbReference>
<dbReference type="InterPro" id="IPR023562">
    <property type="entry name" value="ClpP/TepA"/>
</dbReference>
<dbReference type="InterPro" id="IPR033135">
    <property type="entry name" value="ClpP_His_AS"/>
</dbReference>
<dbReference type="NCBIfam" id="TIGR00493">
    <property type="entry name" value="clpP"/>
    <property type="match status" value="1"/>
</dbReference>
<dbReference type="NCBIfam" id="NF001368">
    <property type="entry name" value="PRK00277.1"/>
    <property type="match status" value="1"/>
</dbReference>
<dbReference type="NCBIfam" id="NF009205">
    <property type="entry name" value="PRK12553.1"/>
    <property type="match status" value="1"/>
</dbReference>
<dbReference type="PANTHER" id="PTHR10381">
    <property type="entry name" value="ATP-DEPENDENT CLP PROTEASE PROTEOLYTIC SUBUNIT"/>
    <property type="match status" value="1"/>
</dbReference>
<dbReference type="PANTHER" id="PTHR10381:SF70">
    <property type="entry name" value="ATP-DEPENDENT CLP PROTEASE PROTEOLYTIC SUBUNIT"/>
    <property type="match status" value="1"/>
</dbReference>
<dbReference type="Pfam" id="PF00574">
    <property type="entry name" value="CLP_protease"/>
    <property type="match status" value="1"/>
</dbReference>
<dbReference type="PRINTS" id="PR00127">
    <property type="entry name" value="CLPPROTEASEP"/>
</dbReference>
<dbReference type="SUPFAM" id="SSF52096">
    <property type="entry name" value="ClpP/crotonase"/>
    <property type="match status" value="1"/>
</dbReference>
<dbReference type="PROSITE" id="PS00382">
    <property type="entry name" value="CLP_PROTEASE_HIS"/>
    <property type="match status" value="1"/>
</dbReference>
<comment type="function">
    <text evidence="1">Cleaves peptides in various proteins in a process that requires ATP hydrolysis. Has a chymotrypsin-like activity. Plays a major role in the degradation of misfolded proteins.</text>
</comment>
<comment type="catalytic activity">
    <reaction evidence="1">
        <text>Hydrolysis of proteins to small peptides in the presence of ATP and magnesium. alpha-casein is the usual test substrate. In the absence of ATP, only oligopeptides shorter than five residues are hydrolyzed (such as succinyl-Leu-Tyr-|-NHMec, and Leu-Tyr-Leu-|-Tyr-Trp, in which cleavage of the -Tyr-|-Leu- and -Tyr-|-Trp bonds also occurs).</text>
        <dbReference type="EC" id="3.4.21.92"/>
    </reaction>
</comment>
<comment type="subunit">
    <text evidence="1">Fourteen ClpP subunits assemble into 2 heptameric rings which stack back to back to give a disk-like structure with a central cavity, resembling the structure of eukaryotic proteasomes.</text>
</comment>
<comment type="subcellular location">
    <subcellularLocation>
        <location evidence="1">Cytoplasm</location>
    </subcellularLocation>
</comment>
<comment type="similarity">
    <text evidence="1">Belongs to the peptidase S14 family.</text>
</comment>
<gene>
    <name evidence="1" type="primary">clpP</name>
    <name type="ordered locus">APP7_1330</name>
</gene>
<organism>
    <name type="scientific">Actinobacillus pleuropneumoniae serotype 7 (strain AP76)</name>
    <dbReference type="NCBI Taxonomy" id="537457"/>
    <lineage>
        <taxon>Bacteria</taxon>
        <taxon>Pseudomonadati</taxon>
        <taxon>Pseudomonadota</taxon>
        <taxon>Gammaproteobacteria</taxon>
        <taxon>Pasteurellales</taxon>
        <taxon>Pasteurellaceae</taxon>
        <taxon>Actinobacillus</taxon>
    </lineage>
</organism>
<accession>B3H252</accession>